<name>H3_GRIJA</name>
<keyword id="KW-0007">Acetylation</keyword>
<keyword id="KW-0158">Chromosome</keyword>
<keyword id="KW-0238">DNA-binding</keyword>
<keyword id="KW-0488">Methylation</keyword>
<keyword id="KW-0544">Nucleosome core</keyword>
<keyword id="KW-0539">Nucleus</keyword>
<keyword id="KW-0597">Phosphoprotein</keyword>
<protein>
    <recommendedName>
        <fullName>Histone H3</fullName>
    </recommendedName>
</protein>
<comment type="function">
    <text>Core component of nucleosome. Nucleosomes wrap and compact DNA into chromatin, limiting DNA accessibility to the cellular machineries which require DNA as a template. Histones thereby play a central role in transcription regulation, DNA repair, DNA replication and chromosomal stability. DNA accessibility is regulated via a complex set of post-translational modifications of histones, also called histone code, and nucleosome remodeling.</text>
</comment>
<comment type="subunit">
    <text>The nucleosome is a histone octamer containing two molecules each of H2A, H2B, H3 and H4 assembled in one H3-H4 heterotetramer and two H2A-H2B heterodimers. The octamer wraps approximately 147 bp of DNA.</text>
</comment>
<comment type="subcellular location">
    <subcellularLocation>
        <location evidence="1">Nucleus</location>
    </subcellularLocation>
    <subcellularLocation>
        <location evidence="1">Chromosome</location>
    </subcellularLocation>
</comment>
<comment type="PTM">
    <text evidence="1">Acetylation is generally linked to gene activation. Can be acetylated to form H3K9ac, H3K14ac, H3K18ac and H3K23ac. H3K9ac could compete with H3K9me and prevent gene silencing. H3K9ac is restricted to euchromatin (By similarity).</text>
</comment>
<comment type="PTM">
    <text evidence="1">Methylated to form mainly H3K4me, H3K9me, H3K18me, H3K23me, H3K27me and H3K36me. H3K4me1/2/3, H3K9me3, H3K27me3 and H3K36me1/2/3 are typical marks for euchromatin, whereas heterochromatic chromocenters are enriched in H3K9me1/2 and H3K27me1/2. H2BK143ub1 is probably prerequisite for H3K4me (By similarity).</text>
</comment>
<comment type="PTM">
    <text evidence="1">Can be phosphorylated to form H3S10ph, H3T11ph and H3S28ph.</text>
</comment>
<comment type="similarity">
    <text evidence="3">Belongs to the histone H3 family.</text>
</comment>
<comment type="caution">
    <text evidence="3">To ensure consistency between histone entries, we follow the 'Brno' nomenclature for histone modifications, with positions referring to those used in the literature for the 'closest' model organism. Due to slight variations in histone sequences between organisms and to the presence of initiator methionine in UniProtKB/Swiss-Prot sequences, the actual positions of modified amino acids in the sequence generally differ. In this entry the following conventions are used: H3K4me = methylated Lys-5; H3K9ac = acetylated Lys-10; H3K9me = methylated Lys-10; H3S10ph = phosphorylated Ser-11; H3T11ph = phosphorylated Thr-12; H3K14ac = acetylated Lys-15; H3K18ac = acetylated Lys-19; H3K18me = methylated Lys-19; H3K23ac = acetylated Lys-24; H3K23me = methylated Lys-24; H3K27me = methylated Lys-28; H3S28ph = phosphorylated Ser-29; H3K36me = methylated Lys-37.</text>
</comment>
<evidence type="ECO:0000250" key="1"/>
<evidence type="ECO:0000256" key="2">
    <source>
        <dbReference type="SAM" id="MobiDB-lite"/>
    </source>
</evidence>
<evidence type="ECO:0000305" key="3"/>
<accession>Q7XYZ0</accession>
<sequence length="136" mass="15328">MARTKQTARKSTGGKAPRKQLATKAARKSAPASGGVKKPHRFRPGTVALREIRRFQKSTELLVRKLPFQRLVREIAQDFKSDLRFQSSAVLALQEAAEAYMVGLFEDTNLCAIHAKRVTIMPKDIQLARRIRGERT</sequence>
<dbReference type="EMBL" id="AY124026">
    <property type="protein sequence ID" value="AAN39007.1"/>
    <property type="molecule type" value="mRNA"/>
</dbReference>
<dbReference type="SMR" id="Q7XYZ0"/>
<dbReference type="GO" id="GO:0000786">
    <property type="term" value="C:nucleosome"/>
    <property type="evidence" value="ECO:0007669"/>
    <property type="project" value="UniProtKB-KW"/>
</dbReference>
<dbReference type="GO" id="GO:0005634">
    <property type="term" value="C:nucleus"/>
    <property type="evidence" value="ECO:0007669"/>
    <property type="project" value="UniProtKB-SubCell"/>
</dbReference>
<dbReference type="GO" id="GO:0003677">
    <property type="term" value="F:DNA binding"/>
    <property type="evidence" value="ECO:0007669"/>
    <property type="project" value="UniProtKB-KW"/>
</dbReference>
<dbReference type="GO" id="GO:0046982">
    <property type="term" value="F:protein heterodimerization activity"/>
    <property type="evidence" value="ECO:0007669"/>
    <property type="project" value="InterPro"/>
</dbReference>
<dbReference type="GO" id="GO:0030527">
    <property type="term" value="F:structural constituent of chromatin"/>
    <property type="evidence" value="ECO:0007669"/>
    <property type="project" value="InterPro"/>
</dbReference>
<dbReference type="CDD" id="cd22911">
    <property type="entry name" value="HFD_H3"/>
    <property type="match status" value="1"/>
</dbReference>
<dbReference type="FunFam" id="1.10.20.10:FF:000078">
    <property type="entry name" value="Histone H3"/>
    <property type="match status" value="1"/>
</dbReference>
<dbReference type="FunFam" id="1.10.20.10:FF:000044">
    <property type="entry name" value="Histone H3.3"/>
    <property type="match status" value="1"/>
</dbReference>
<dbReference type="Gene3D" id="1.10.20.10">
    <property type="entry name" value="Histone, subunit A"/>
    <property type="match status" value="1"/>
</dbReference>
<dbReference type="InterPro" id="IPR009072">
    <property type="entry name" value="Histone-fold"/>
</dbReference>
<dbReference type="InterPro" id="IPR007125">
    <property type="entry name" value="Histone_H2A/H2B/H3"/>
</dbReference>
<dbReference type="InterPro" id="IPR000164">
    <property type="entry name" value="Histone_H3/CENP-A"/>
</dbReference>
<dbReference type="PANTHER" id="PTHR11426">
    <property type="entry name" value="HISTONE H3"/>
    <property type="match status" value="1"/>
</dbReference>
<dbReference type="Pfam" id="PF00125">
    <property type="entry name" value="Histone"/>
    <property type="match status" value="1"/>
</dbReference>
<dbReference type="PRINTS" id="PR00622">
    <property type="entry name" value="HISTONEH3"/>
</dbReference>
<dbReference type="SMART" id="SM00428">
    <property type="entry name" value="H3"/>
    <property type="match status" value="1"/>
</dbReference>
<dbReference type="SUPFAM" id="SSF47113">
    <property type="entry name" value="Histone-fold"/>
    <property type="match status" value="1"/>
</dbReference>
<dbReference type="PROSITE" id="PS00322">
    <property type="entry name" value="HISTONE_H3_1"/>
    <property type="match status" value="1"/>
</dbReference>
<dbReference type="PROSITE" id="PS00959">
    <property type="entry name" value="HISTONE_H3_2"/>
    <property type="match status" value="1"/>
</dbReference>
<proteinExistence type="evidence at transcript level"/>
<reference key="1">
    <citation type="submission" date="2002-06" db="EMBL/GenBank/DDBJ databases">
        <authorList>
            <person name="Liu C.L."/>
            <person name="Lee Y.K."/>
            <person name="Lee H.K."/>
        </authorList>
    </citation>
    <scope>NUCLEOTIDE SEQUENCE [MRNA]</scope>
</reference>
<feature type="initiator methionine" description="Removed" evidence="1">
    <location>
        <position position="1"/>
    </location>
</feature>
<feature type="chain" id="PRO_0000221277" description="Histone H3">
    <location>
        <begin position="2"/>
        <end position="136"/>
    </location>
</feature>
<feature type="region of interest" description="Disordered" evidence="2">
    <location>
        <begin position="1"/>
        <end position="43"/>
    </location>
</feature>
<feature type="modified residue" description="N6-methylated lysine" evidence="1">
    <location>
        <position position="5"/>
    </location>
</feature>
<feature type="modified residue" description="N6-acetyllysine; alternate" evidence="1">
    <location>
        <position position="10"/>
    </location>
</feature>
<feature type="modified residue" description="N6-methylated lysine; alternate" evidence="1">
    <location>
        <position position="10"/>
    </location>
</feature>
<feature type="modified residue" description="Phosphoserine" evidence="1">
    <location>
        <position position="11"/>
    </location>
</feature>
<feature type="modified residue" description="Phosphothreonine" evidence="1">
    <location>
        <position position="12"/>
    </location>
</feature>
<feature type="modified residue" description="N6-acetyllysine" evidence="1">
    <location>
        <position position="15"/>
    </location>
</feature>
<feature type="modified residue" description="N6-acetyllysine; alternate" evidence="1">
    <location>
        <position position="19"/>
    </location>
</feature>
<feature type="modified residue" description="N6-methylated lysine; alternate" evidence="1">
    <location>
        <position position="19"/>
    </location>
</feature>
<feature type="modified residue" description="N6-acetyllysine; alternate" evidence="1">
    <location>
        <position position="24"/>
    </location>
</feature>
<feature type="modified residue" description="N6-methylated lysine; alternate" evidence="1">
    <location>
        <position position="24"/>
    </location>
</feature>
<feature type="modified residue" description="N6-methylated lysine" evidence="1">
    <location>
        <position position="28"/>
    </location>
</feature>
<feature type="modified residue" description="Phosphoserine" evidence="1">
    <location>
        <position position="29"/>
    </location>
</feature>
<feature type="modified residue" description="N6-methylated lysine" evidence="1">
    <location>
        <position position="37"/>
    </location>
</feature>
<organism>
    <name type="scientific">Griffithsia japonica</name>
    <name type="common">Red alga</name>
    <dbReference type="NCBI Taxonomy" id="83288"/>
    <lineage>
        <taxon>Eukaryota</taxon>
        <taxon>Rhodophyta</taxon>
        <taxon>Florideophyceae</taxon>
        <taxon>Rhodymeniophycidae</taxon>
        <taxon>Ceramiales</taxon>
        <taxon>Ceramiaceae</taxon>
        <taxon>Griffithsia</taxon>
    </lineage>
</organism>